<reference key="1">
    <citation type="journal article" date="2000" name="Mol. Biol. Evol.">
        <title>The complete mitochondrial DNA sequence of the horseshoe crab Limulus polyphemus.</title>
        <authorList>
            <person name="Lavrov D.V."/>
            <person name="Boore J.L."/>
            <person name="Brown W.M."/>
        </authorList>
    </citation>
    <scope>NUCLEOTIDE SEQUENCE [GENOMIC DNA]</scope>
</reference>
<proteinExistence type="inferred from homology"/>
<gene>
    <name type="primary">MT-ATP8</name>
    <name type="synonym">ATP8</name>
    <name type="synonym">ATPASE8</name>
    <name type="synonym">MTATP8</name>
</gene>
<feature type="chain" id="PRO_0000195543" description="ATP synthase protein 8">
    <location>
        <begin position="1"/>
        <end position="51"/>
    </location>
</feature>
<feature type="transmembrane region" description="Helical" evidence="2">
    <location>
        <begin position="7"/>
        <end position="27"/>
    </location>
</feature>
<accession>Q9MLQ5</accession>
<name>ATP8_LIMPO</name>
<keyword id="KW-0066">ATP synthesis</keyword>
<keyword id="KW-0138">CF(0)</keyword>
<keyword id="KW-0375">Hydrogen ion transport</keyword>
<keyword id="KW-0406">Ion transport</keyword>
<keyword id="KW-0472">Membrane</keyword>
<keyword id="KW-0496">Mitochondrion</keyword>
<keyword id="KW-0812">Transmembrane</keyword>
<keyword id="KW-1133">Transmembrane helix</keyword>
<keyword id="KW-0813">Transport</keyword>
<protein>
    <recommendedName>
        <fullName>ATP synthase protein 8</fullName>
    </recommendedName>
    <alternativeName>
        <fullName>A6L</fullName>
    </alternativeName>
    <alternativeName>
        <fullName>F-ATPase subunit 8</fullName>
    </alternativeName>
</protein>
<dbReference type="EMBL" id="AF216203">
    <property type="protein sequence ID" value="AAF72111.1"/>
    <property type="molecule type" value="Genomic_DNA"/>
</dbReference>
<dbReference type="RefSeq" id="NP_150604.1">
    <property type="nucleotide sequence ID" value="NC_003057.1"/>
</dbReference>
<dbReference type="SMR" id="Q9MLQ5"/>
<dbReference type="EnsemblMetazoa" id="GeneID_803777_df_mr">
    <property type="protein sequence ID" value="NP_150604.1"/>
    <property type="gene ID" value="GeneID_803777"/>
</dbReference>
<dbReference type="GeneID" id="803777"/>
<dbReference type="KEGG" id="lpol:803777"/>
<dbReference type="CTD" id="4509"/>
<dbReference type="OrthoDB" id="7721627at2759"/>
<dbReference type="Proteomes" id="UP000694941">
    <property type="component" value="Mitochondrion MT"/>
</dbReference>
<dbReference type="GO" id="GO:0031966">
    <property type="term" value="C:mitochondrial membrane"/>
    <property type="evidence" value="ECO:0007669"/>
    <property type="project" value="UniProtKB-SubCell"/>
</dbReference>
<dbReference type="GO" id="GO:0045259">
    <property type="term" value="C:proton-transporting ATP synthase complex"/>
    <property type="evidence" value="ECO:0007669"/>
    <property type="project" value="UniProtKB-KW"/>
</dbReference>
<dbReference type="GO" id="GO:0015078">
    <property type="term" value="F:proton transmembrane transporter activity"/>
    <property type="evidence" value="ECO:0007669"/>
    <property type="project" value="InterPro"/>
</dbReference>
<dbReference type="GO" id="GO:0015986">
    <property type="term" value="P:proton motive force-driven ATP synthesis"/>
    <property type="evidence" value="ECO:0007669"/>
    <property type="project" value="InterPro"/>
</dbReference>
<dbReference type="InterPro" id="IPR001421">
    <property type="entry name" value="ATP8_metazoa"/>
</dbReference>
<dbReference type="Pfam" id="PF00895">
    <property type="entry name" value="ATP-synt_8"/>
    <property type="match status" value="1"/>
</dbReference>
<evidence type="ECO:0000250" key="1"/>
<evidence type="ECO:0000255" key="2"/>
<evidence type="ECO:0000305" key="3"/>
<geneLocation type="mitochondrion"/>
<organism>
    <name type="scientific">Limulus polyphemus</name>
    <name type="common">Atlantic horseshoe crab</name>
    <dbReference type="NCBI Taxonomy" id="6850"/>
    <lineage>
        <taxon>Eukaryota</taxon>
        <taxon>Metazoa</taxon>
        <taxon>Ecdysozoa</taxon>
        <taxon>Arthropoda</taxon>
        <taxon>Chelicerata</taxon>
        <taxon>Merostomata</taxon>
        <taxon>Xiphosura</taxon>
        <taxon>Limulidae</taxon>
        <taxon>Limulus</taxon>
    </lineage>
</organism>
<comment type="function">
    <text evidence="1">Mitochondrial membrane ATP synthase (F(1)F(0) ATP synthase or Complex V) produces ATP from ADP in the presence of a proton gradient across the membrane which is generated by electron transport complexes of the respiratory chain. F-type ATPases consist of two structural domains, F(1) - containing the extramembraneous catalytic core and F(0) - containing the membrane proton channel, linked together by a central stalk and a peripheral stalk. During catalysis, ATP synthesis in the catalytic domain of F(1) is coupled via a rotary mechanism of the central stalk subunits to proton translocation. Part of the complex F(0) domain. Minor subunit located with subunit a in the membrane (By similarity).</text>
</comment>
<comment type="subunit">
    <text evidence="1">F-type ATPases have 2 components, CF(1) - the catalytic core - and CF(0) - the membrane proton channel.</text>
</comment>
<comment type="subcellular location">
    <subcellularLocation>
        <location>Mitochondrion membrane</location>
        <topology>Single-pass membrane protein</topology>
    </subcellularLocation>
</comment>
<comment type="similarity">
    <text evidence="3">Belongs to the ATPase protein 8 family.</text>
</comment>
<sequence>MPQMAPLNWAMMTIMFSLSLLVSMIILYSNFNSTPPTKMKMKTSQKLIWKW</sequence>